<sequence length="247" mass="27513">MDLMMALKRVCRVLLFVTQMYVFSGRGSLSFEYSQPVAQPLKDTFPSSTTATSIKATTTKMPEYMEICPSNGQCSRLASDCMTCATNYSCIYGKLVTFNCTAKNGVVCFDENSQRQEYFTISMACQFCWQLPPSDYVCNLSSSCKTISCPRQRYNTTCTVLDHVHCLGNRTFPKMLYCNWTGGYKWSTALALSITLGGFGADRFYLGQWREGLGKLFSFGGLGIWTLIDVFLISVGYVGPADGSLYI</sequence>
<organism>
    <name type="scientific">Xenopus laevis</name>
    <name type="common">African clawed frog</name>
    <dbReference type="NCBI Taxonomy" id="8355"/>
    <lineage>
        <taxon>Eukaryota</taxon>
        <taxon>Metazoa</taxon>
        <taxon>Chordata</taxon>
        <taxon>Craniata</taxon>
        <taxon>Vertebrata</taxon>
        <taxon>Euteleostomi</taxon>
        <taxon>Amphibia</taxon>
        <taxon>Batrachia</taxon>
        <taxon>Anura</taxon>
        <taxon>Pipoidea</taxon>
        <taxon>Pipidae</taxon>
        <taxon>Xenopodinae</taxon>
        <taxon>Xenopus</taxon>
        <taxon>Xenopus</taxon>
    </lineage>
</organism>
<accession>Q6DE06</accession>
<name>TM2D3_XENLA</name>
<dbReference type="EMBL" id="BC077341">
    <property type="protein sequence ID" value="AAH77341.1"/>
    <property type="molecule type" value="mRNA"/>
</dbReference>
<dbReference type="RefSeq" id="NP_001086712.1">
    <property type="nucleotide sequence ID" value="NM_001093243.1"/>
</dbReference>
<dbReference type="GlyCosmos" id="Q6DE06">
    <property type="glycosylation" value="6 sites, No reported glycans"/>
</dbReference>
<dbReference type="DNASU" id="446547"/>
<dbReference type="GeneID" id="446547"/>
<dbReference type="KEGG" id="xla:446547"/>
<dbReference type="AGR" id="Xenbase:XB-GENE-5805783"/>
<dbReference type="CTD" id="446547"/>
<dbReference type="Xenbase" id="XB-GENE-5805783">
    <property type="gene designation" value="tm2d3.S"/>
</dbReference>
<dbReference type="OMA" id="FERKMIC"/>
<dbReference type="OrthoDB" id="10257855at2759"/>
<dbReference type="Proteomes" id="UP000186698">
    <property type="component" value="Chromosome 2S"/>
</dbReference>
<dbReference type="Bgee" id="446547">
    <property type="expression patterns" value="Expressed in ovary and 19 other cell types or tissues"/>
</dbReference>
<dbReference type="GO" id="GO:0016020">
    <property type="term" value="C:membrane"/>
    <property type="evidence" value="ECO:0007669"/>
    <property type="project" value="UniProtKB-SubCell"/>
</dbReference>
<dbReference type="InterPro" id="IPR007829">
    <property type="entry name" value="TM2"/>
</dbReference>
<dbReference type="InterPro" id="IPR050932">
    <property type="entry name" value="TM2D1-3-like"/>
</dbReference>
<dbReference type="PANTHER" id="PTHR21016">
    <property type="entry name" value="BETA-AMYLOID BINDING PROTEIN-RELATED"/>
    <property type="match status" value="1"/>
</dbReference>
<dbReference type="PANTHER" id="PTHR21016:SF7">
    <property type="entry name" value="TM2 DOMAIN-CONTAINING PROTEIN 3"/>
    <property type="match status" value="1"/>
</dbReference>
<dbReference type="Pfam" id="PF05154">
    <property type="entry name" value="TM2"/>
    <property type="match status" value="1"/>
</dbReference>
<proteinExistence type="evidence at transcript level"/>
<gene>
    <name type="primary">tm2d3</name>
</gene>
<feature type="signal peptide" evidence="1">
    <location>
        <begin position="1"/>
        <end position="30"/>
    </location>
</feature>
<feature type="chain" id="PRO_0000298992" description="TM2 domain-containing protein 3">
    <location>
        <begin position="31"/>
        <end position="247"/>
    </location>
</feature>
<feature type="topological domain" description="Extracellular" evidence="3">
    <location>
        <begin position="31"/>
        <end position="179"/>
    </location>
</feature>
<feature type="transmembrane region" description="Helical" evidence="1">
    <location>
        <begin position="180"/>
        <end position="200"/>
    </location>
</feature>
<feature type="topological domain" description="Cytoplasmic" evidence="3">
    <location>
        <begin position="201"/>
        <end position="215"/>
    </location>
</feature>
<feature type="transmembrane region" description="Helical" evidence="1">
    <location>
        <begin position="216"/>
        <end position="236"/>
    </location>
</feature>
<feature type="topological domain" description="Extracellular" evidence="3">
    <location>
        <begin position="237"/>
        <end position="247"/>
    </location>
</feature>
<feature type="domain" description="TM2" evidence="1">
    <location>
        <begin position="183"/>
        <end position="231"/>
    </location>
</feature>
<feature type="glycosylation site" description="N-linked (GlcNAc...) asparagine" evidence="2">
    <location>
        <position position="87"/>
    </location>
</feature>
<feature type="glycosylation site" description="N-linked (GlcNAc...) asparagine" evidence="2">
    <location>
        <position position="99"/>
    </location>
</feature>
<feature type="glycosylation site" description="N-linked (GlcNAc...) asparagine" evidence="2">
    <location>
        <position position="139"/>
    </location>
</feature>
<feature type="glycosylation site" description="N-linked (GlcNAc...) asparagine" evidence="2">
    <location>
        <position position="155"/>
    </location>
</feature>
<feature type="glycosylation site" description="N-linked (GlcNAc...) asparagine" evidence="2">
    <location>
        <position position="169"/>
    </location>
</feature>
<feature type="glycosylation site" description="N-linked (GlcNAc...) asparagine" evidence="2">
    <location>
        <position position="179"/>
    </location>
</feature>
<comment type="subcellular location">
    <subcellularLocation>
        <location evidence="3">Membrane</location>
        <topology evidence="3">Multi-pass membrane protein</topology>
    </subcellularLocation>
</comment>
<comment type="similarity">
    <text evidence="3">Belongs to the TM2 family.</text>
</comment>
<protein>
    <recommendedName>
        <fullName>TM2 domain-containing protein 3</fullName>
    </recommendedName>
</protein>
<keyword id="KW-0325">Glycoprotein</keyword>
<keyword id="KW-0472">Membrane</keyword>
<keyword id="KW-1185">Reference proteome</keyword>
<keyword id="KW-0732">Signal</keyword>
<keyword id="KW-0812">Transmembrane</keyword>
<keyword id="KW-1133">Transmembrane helix</keyword>
<evidence type="ECO:0000255" key="1"/>
<evidence type="ECO:0000255" key="2">
    <source>
        <dbReference type="PROSITE-ProRule" id="PRU00498"/>
    </source>
</evidence>
<evidence type="ECO:0000305" key="3"/>
<reference key="1">
    <citation type="submission" date="2004-07" db="EMBL/GenBank/DDBJ databases">
        <authorList>
            <consortium name="NIH - Xenopus Gene Collection (XGC) project"/>
        </authorList>
    </citation>
    <scope>NUCLEOTIDE SEQUENCE [LARGE SCALE MRNA]</scope>
    <source>
        <tissue>Ovary</tissue>
    </source>
</reference>